<dbReference type="EC" id="2.7.1.67" evidence="8 22"/>
<dbReference type="EMBL" id="AJ011121">
    <property type="protein sequence ID" value="CAA09495.1"/>
    <property type="molecule type" value="mRNA"/>
</dbReference>
<dbReference type="EMBL" id="AJ011122">
    <property type="status" value="NOT_ANNOTATED_CDS"/>
    <property type="molecule type" value="mRNA"/>
</dbReference>
<dbReference type="EMBL" id="AJ011123">
    <property type="protein sequence ID" value="CAA09496.1"/>
    <property type="molecule type" value="mRNA"/>
</dbReference>
<dbReference type="EMBL" id="AB005910">
    <property type="protein sequence ID" value="BAA21661.1"/>
    <property type="status" value="ALT_INIT"/>
    <property type="molecule type" value="mRNA"/>
</dbReference>
<dbReference type="EMBL" id="U81802">
    <property type="protein sequence ID" value="AAC51156.1"/>
    <property type="molecule type" value="mRNA"/>
</dbReference>
<dbReference type="EMBL" id="AK294606">
    <property type="protein sequence ID" value="BAG57793.1"/>
    <property type="molecule type" value="mRNA"/>
</dbReference>
<dbReference type="EMBL" id="AL391069">
    <property type="status" value="NOT_ANNOTATED_CDS"/>
    <property type="molecule type" value="Genomic_DNA"/>
</dbReference>
<dbReference type="EMBL" id="CH471121">
    <property type="protein sequence ID" value="EAW53449.1"/>
    <property type="molecule type" value="Genomic_DNA"/>
</dbReference>
<dbReference type="EMBL" id="CH471121">
    <property type="protein sequence ID" value="EAW53450.1"/>
    <property type="status" value="ALT_SEQ"/>
    <property type="molecule type" value="Genomic_DNA"/>
</dbReference>
<dbReference type="EMBL" id="BC000029">
    <property type="protein sequence ID" value="AAH00029.1"/>
    <property type="molecule type" value="mRNA"/>
</dbReference>
<dbReference type="EMBL" id="BC040300">
    <property type="protein sequence ID" value="AAH40300.1"/>
    <property type="molecule type" value="mRNA"/>
</dbReference>
<dbReference type="CCDS" id="CCDS55637.1">
    <molecule id="Q9UBF8-3"/>
</dbReference>
<dbReference type="CCDS" id="CCDS55638.1">
    <molecule id="Q9UBF8-2"/>
</dbReference>
<dbReference type="CCDS" id="CCDS81376.1">
    <molecule id="Q9UBF8-1"/>
</dbReference>
<dbReference type="PIR" id="JC5706">
    <property type="entry name" value="JC5706"/>
</dbReference>
<dbReference type="RefSeq" id="NP_001185702.1">
    <molecule id="Q9UBF8-2"/>
    <property type="nucleotide sequence ID" value="NM_001198773.3"/>
</dbReference>
<dbReference type="RefSeq" id="NP_001185703.1">
    <molecule id="Q9UBF8-2"/>
    <property type="nucleotide sequence ID" value="NM_001198774.2"/>
</dbReference>
<dbReference type="RefSeq" id="NP_001185704.1">
    <molecule id="Q9UBF8-3"/>
    <property type="nucleotide sequence ID" value="NM_001198775.3"/>
</dbReference>
<dbReference type="RefSeq" id="NP_001317650.1">
    <molecule id="Q9UBF8-1"/>
    <property type="nucleotide sequence ID" value="NM_001330721.2"/>
</dbReference>
<dbReference type="RefSeq" id="NP_001356552.1">
    <molecule id="Q9UBF8-1"/>
    <property type="nucleotide sequence ID" value="NM_001369623.2"/>
</dbReference>
<dbReference type="RefSeq" id="NP_001356553.1">
    <molecule id="Q9UBF8-2"/>
    <property type="nucleotide sequence ID" value="NM_001369624.1"/>
</dbReference>
<dbReference type="RefSeq" id="NP_001356558.1">
    <molecule id="Q9UBF8-1"/>
    <property type="nucleotide sequence ID" value="NM_001369629.2"/>
</dbReference>
<dbReference type="RefSeq" id="NP_002642.1">
    <property type="nucleotide sequence ID" value="NM_002651.3"/>
</dbReference>
<dbReference type="RefSeq" id="XP_016856979.1">
    <property type="nucleotide sequence ID" value="XM_017001490.1"/>
</dbReference>
<dbReference type="RefSeq" id="XP_016856980.1">
    <property type="nucleotide sequence ID" value="XM_017001491.1"/>
</dbReference>
<dbReference type="RefSeq" id="XP_016856981.1">
    <property type="nucleotide sequence ID" value="XM_017001492.1"/>
</dbReference>
<dbReference type="PDB" id="2N73">
    <property type="method" value="NMR"/>
    <property type="chains" value="B=1-68"/>
</dbReference>
<dbReference type="PDB" id="4D0L">
    <property type="method" value="X-ray"/>
    <property type="resolution" value="2.94 A"/>
    <property type="chains" value="A/C/E=121-799"/>
</dbReference>
<dbReference type="PDB" id="4D0M">
    <property type="method" value="X-ray"/>
    <property type="resolution" value="6.00 A"/>
    <property type="chains" value="A/C/G/I/M/O/Q/S/W/Y/c/g=121-799"/>
</dbReference>
<dbReference type="PDB" id="4WAE">
    <property type="method" value="X-ray"/>
    <property type="resolution" value="3.32 A"/>
    <property type="chains" value="A=128-799"/>
</dbReference>
<dbReference type="PDB" id="4WAG">
    <property type="method" value="X-ray"/>
    <property type="resolution" value="3.41 A"/>
    <property type="chains" value="A=128-799"/>
</dbReference>
<dbReference type="PDB" id="5C46">
    <property type="method" value="X-ray"/>
    <property type="resolution" value="2.65 A"/>
    <property type="chains" value="E=121-799"/>
</dbReference>
<dbReference type="PDB" id="5C4G">
    <property type="method" value="X-ray"/>
    <property type="resolution" value="3.20 A"/>
    <property type="chains" value="E=121-799"/>
</dbReference>
<dbReference type="PDB" id="5EUQ">
    <property type="method" value="X-ray"/>
    <property type="resolution" value="3.20 A"/>
    <property type="chains" value="E=121-248, E=523-799"/>
</dbReference>
<dbReference type="PDB" id="5FBL">
    <property type="method" value="X-ray"/>
    <property type="resolution" value="3.37 A"/>
    <property type="chains" value="A=128-799"/>
</dbReference>
<dbReference type="PDB" id="5FBQ">
    <property type="method" value="X-ray"/>
    <property type="resolution" value="3.79 A"/>
    <property type="chains" value="A=128-799"/>
</dbReference>
<dbReference type="PDB" id="5FBR">
    <property type="method" value="X-ray"/>
    <property type="resolution" value="3.28 A"/>
    <property type="chains" value="A=128-799"/>
</dbReference>
<dbReference type="PDB" id="5FBV">
    <property type="method" value="X-ray"/>
    <property type="resolution" value="3.29 A"/>
    <property type="chains" value="A=128-799"/>
</dbReference>
<dbReference type="PDB" id="5FBW">
    <property type="method" value="X-ray"/>
    <property type="resolution" value="3.49 A"/>
    <property type="chains" value="A=128-799"/>
</dbReference>
<dbReference type="PDB" id="5LX2">
    <property type="method" value="X-ray"/>
    <property type="resolution" value="2.58 A"/>
    <property type="chains" value="B=292-297"/>
</dbReference>
<dbReference type="PDB" id="5NAS">
    <property type="method" value="X-ray"/>
    <property type="resolution" value="2.08 A"/>
    <property type="chains" value="C/D=289-297"/>
</dbReference>
<dbReference type="PDB" id="6GL3">
    <property type="method" value="X-ray"/>
    <property type="resolution" value="2.77 A"/>
    <property type="chains" value="A/B=317-428, A/B=532-798"/>
</dbReference>
<dbReference type="PDB" id="8Q6F">
    <property type="method" value="X-ray"/>
    <property type="resolution" value="1.51 A"/>
    <property type="chains" value="A=291-816"/>
</dbReference>
<dbReference type="PDB" id="8Q6G">
    <property type="method" value="X-ray"/>
    <property type="resolution" value="1.54 A"/>
    <property type="chains" value="A=291-816"/>
</dbReference>
<dbReference type="PDB" id="8Q6H">
    <property type="method" value="X-ray"/>
    <property type="resolution" value="1.94 A"/>
    <property type="chains" value="A=291-816"/>
</dbReference>
<dbReference type="PDB" id="8VOF">
    <property type="method" value="X-ray"/>
    <property type="resolution" value="3.00 A"/>
    <property type="chains" value="A=121-799"/>
</dbReference>
<dbReference type="PDBsum" id="2N73"/>
<dbReference type="PDBsum" id="4D0L"/>
<dbReference type="PDBsum" id="4D0M"/>
<dbReference type="PDBsum" id="4WAE"/>
<dbReference type="PDBsum" id="4WAG"/>
<dbReference type="PDBsum" id="5C46"/>
<dbReference type="PDBsum" id="5C4G"/>
<dbReference type="PDBsum" id="5EUQ"/>
<dbReference type="PDBsum" id="5FBL"/>
<dbReference type="PDBsum" id="5FBQ"/>
<dbReference type="PDBsum" id="5FBR"/>
<dbReference type="PDBsum" id="5FBV"/>
<dbReference type="PDBsum" id="5FBW"/>
<dbReference type="PDBsum" id="5LX2"/>
<dbReference type="PDBsum" id="5NAS"/>
<dbReference type="PDBsum" id="6GL3"/>
<dbReference type="PDBsum" id="8Q6F"/>
<dbReference type="PDBsum" id="8Q6G"/>
<dbReference type="PDBsum" id="8Q6H"/>
<dbReference type="PDBsum" id="8VOF"/>
<dbReference type="SMR" id="Q9UBF8"/>
<dbReference type="BioGRID" id="111316">
    <property type="interactions" value="59"/>
</dbReference>
<dbReference type="DIP" id="DIP-42267N"/>
<dbReference type="FunCoup" id="Q9UBF8">
    <property type="interactions" value="3564"/>
</dbReference>
<dbReference type="IntAct" id="Q9UBF8">
    <property type="interactions" value="32"/>
</dbReference>
<dbReference type="MINT" id="Q9UBF8"/>
<dbReference type="STRING" id="9606.ENSP00000357869"/>
<dbReference type="BindingDB" id="Q9UBF8"/>
<dbReference type="ChEMBL" id="CHEMBL3268"/>
<dbReference type="DrugBank" id="DB12010">
    <property type="generic name" value="Fostamatinib"/>
</dbReference>
<dbReference type="DrugBank" id="DB06836">
    <property type="generic name" value="N-(5-{4-Chloro-3-[(2-hydroxyethyl)sulfamoyl]phenyl}-4-methyl-1,3-thiazol-2-yl)acetamide"/>
</dbReference>
<dbReference type="DrugCentral" id="Q9UBF8"/>
<dbReference type="GuidetoPHARMACOLOGY" id="2149"/>
<dbReference type="SwissLipids" id="SLP:000001947">
    <molecule id="Q9UBF8-2"/>
</dbReference>
<dbReference type="GlyGen" id="Q9UBF8">
    <property type="glycosylation" value="1 site, 1 O-linked glycan (1 site)"/>
</dbReference>
<dbReference type="iPTMnet" id="Q9UBF8"/>
<dbReference type="PhosphoSitePlus" id="Q9UBF8"/>
<dbReference type="BioMuta" id="PI4KB"/>
<dbReference type="DMDM" id="38372507"/>
<dbReference type="CPTAC" id="CPTAC-2965"/>
<dbReference type="CPTAC" id="CPTAC-2966"/>
<dbReference type="jPOST" id="Q9UBF8"/>
<dbReference type="MassIVE" id="Q9UBF8"/>
<dbReference type="PaxDb" id="9606-ENSP00000357869"/>
<dbReference type="PeptideAtlas" id="Q9UBF8"/>
<dbReference type="ProteomicsDB" id="83959">
    <molecule id="Q9UBF8-1"/>
</dbReference>
<dbReference type="ProteomicsDB" id="83960">
    <molecule id="Q9UBF8-2"/>
</dbReference>
<dbReference type="ProteomicsDB" id="83961">
    <molecule id="Q9UBF8-3"/>
</dbReference>
<dbReference type="Pumba" id="Q9UBF8"/>
<dbReference type="Antibodypedia" id="1666">
    <property type="antibodies" value="139 antibodies from 30 providers"/>
</dbReference>
<dbReference type="DNASU" id="5298"/>
<dbReference type="Ensembl" id="ENST00000368872.5">
    <molecule id="Q9UBF8-2"/>
    <property type="protein sequence ID" value="ENSP00000357866.1"/>
    <property type="gene ID" value="ENSG00000143393.17"/>
</dbReference>
<dbReference type="Ensembl" id="ENST00000368873.6">
    <molecule id="Q9UBF8-1"/>
    <property type="protein sequence ID" value="ENSP00000357867.1"/>
    <property type="gene ID" value="ENSG00000143393.17"/>
</dbReference>
<dbReference type="Ensembl" id="ENST00000368874.8">
    <molecule id="Q9UBF8-2"/>
    <property type="protein sequence ID" value="ENSP00000357868.4"/>
    <property type="gene ID" value="ENSG00000143393.17"/>
</dbReference>
<dbReference type="Ensembl" id="ENST00000529142.5">
    <molecule id="Q9UBF8-3"/>
    <property type="protein sequence ID" value="ENSP00000433149.1"/>
    <property type="gene ID" value="ENSG00000143393.17"/>
</dbReference>
<dbReference type="GeneID" id="5298"/>
<dbReference type="KEGG" id="hsa:5298"/>
<dbReference type="MANE-Select" id="ENST00000368873.6">
    <property type="protein sequence ID" value="ENSP00000357867.1"/>
    <property type="RefSeq nucleotide sequence ID" value="NM_001369623.2"/>
    <property type="RefSeq protein sequence ID" value="NP_001356552.1"/>
</dbReference>
<dbReference type="UCSC" id="uc001ext.4">
    <molecule id="Q9UBF8-1"/>
    <property type="organism name" value="human"/>
</dbReference>
<dbReference type="AGR" id="HGNC:8984"/>
<dbReference type="CTD" id="5298"/>
<dbReference type="DisGeNET" id="5298"/>
<dbReference type="GeneCards" id="PI4KB"/>
<dbReference type="HGNC" id="HGNC:8984">
    <property type="gene designation" value="PI4KB"/>
</dbReference>
<dbReference type="HPA" id="ENSG00000143393">
    <property type="expression patterns" value="Low tissue specificity"/>
</dbReference>
<dbReference type="MalaCards" id="PI4KB"/>
<dbReference type="MIM" id="602758">
    <property type="type" value="gene"/>
</dbReference>
<dbReference type="MIM" id="620281">
    <property type="type" value="phenotype"/>
</dbReference>
<dbReference type="neXtProt" id="NX_Q9UBF8"/>
<dbReference type="OpenTargets" id="ENSG00000143393"/>
<dbReference type="PharmGKB" id="PA162399420"/>
<dbReference type="VEuPathDB" id="HostDB:ENSG00000143393"/>
<dbReference type="eggNOG" id="KOG0903">
    <property type="taxonomic scope" value="Eukaryota"/>
</dbReference>
<dbReference type="GeneTree" id="ENSGT00550000074892"/>
<dbReference type="InParanoid" id="Q9UBF8"/>
<dbReference type="OMA" id="HKLANCN"/>
<dbReference type="OrthoDB" id="10264149at2759"/>
<dbReference type="PAN-GO" id="Q9UBF8">
    <property type="GO annotations" value="5 GO annotations based on evolutionary models"/>
</dbReference>
<dbReference type="PhylomeDB" id="Q9UBF8"/>
<dbReference type="TreeFam" id="TF102042"/>
<dbReference type="BioCyc" id="MetaCyc:HS07046-MONOMER"/>
<dbReference type="BRENDA" id="2.7.1.67">
    <property type="organism ID" value="2681"/>
</dbReference>
<dbReference type="PathwayCommons" id="Q9UBF8"/>
<dbReference type="Reactome" id="R-HSA-1660514">
    <property type="pathway name" value="Synthesis of PIPs at the Golgi membrane"/>
</dbReference>
<dbReference type="SignaLink" id="Q9UBF8"/>
<dbReference type="SIGNOR" id="Q9UBF8"/>
<dbReference type="BioGRID-ORCS" id="5298">
    <property type="hits" value="200 hits in 1169 CRISPR screens"/>
</dbReference>
<dbReference type="ChiTaRS" id="PI4KB">
    <property type="organism name" value="human"/>
</dbReference>
<dbReference type="EvolutionaryTrace" id="Q9UBF8"/>
<dbReference type="GeneWiki" id="PI4KB"/>
<dbReference type="GenomeRNAi" id="5298"/>
<dbReference type="Pharos" id="Q9UBF8">
    <property type="development level" value="Tchem"/>
</dbReference>
<dbReference type="PRO" id="PR:Q9UBF8"/>
<dbReference type="Proteomes" id="UP000005640">
    <property type="component" value="Chromosome 1"/>
</dbReference>
<dbReference type="RNAct" id="Q9UBF8">
    <property type="molecule type" value="protein"/>
</dbReference>
<dbReference type="Bgee" id="ENSG00000143393">
    <property type="expression patterns" value="Expressed in right lobe of thyroid gland and 208 other cell types or tissues"/>
</dbReference>
<dbReference type="ExpressionAtlas" id="Q9UBF8">
    <property type="expression patterns" value="baseline and differential"/>
</dbReference>
<dbReference type="GO" id="GO:0005737">
    <property type="term" value="C:cytoplasm"/>
    <property type="evidence" value="ECO:0000318"/>
    <property type="project" value="GO_Central"/>
</dbReference>
<dbReference type="GO" id="GO:0005829">
    <property type="term" value="C:cytosol"/>
    <property type="evidence" value="ECO:0000304"/>
    <property type="project" value="Reactome"/>
</dbReference>
<dbReference type="GO" id="GO:0005768">
    <property type="term" value="C:endosome"/>
    <property type="evidence" value="ECO:0000304"/>
    <property type="project" value="ProtInc"/>
</dbReference>
<dbReference type="GO" id="GO:0005794">
    <property type="term" value="C:Golgi apparatus"/>
    <property type="evidence" value="ECO:0000314"/>
    <property type="project" value="MGI"/>
</dbReference>
<dbReference type="GO" id="GO:0000139">
    <property type="term" value="C:Golgi membrane"/>
    <property type="evidence" value="ECO:0000314"/>
    <property type="project" value="UniProtKB"/>
</dbReference>
<dbReference type="GO" id="GO:0016020">
    <property type="term" value="C:membrane"/>
    <property type="evidence" value="ECO:0000318"/>
    <property type="project" value="GO_Central"/>
</dbReference>
<dbReference type="GO" id="GO:0005741">
    <property type="term" value="C:mitochondrial outer membrane"/>
    <property type="evidence" value="ECO:0007669"/>
    <property type="project" value="UniProtKB-SubCell"/>
</dbReference>
<dbReference type="GO" id="GO:0048471">
    <property type="term" value="C:perinuclear region of cytoplasm"/>
    <property type="evidence" value="ECO:0007669"/>
    <property type="project" value="UniProtKB-SubCell"/>
</dbReference>
<dbReference type="GO" id="GO:0030867">
    <property type="term" value="C:rough endoplasmic reticulum membrane"/>
    <property type="evidence" value="ECO:0007669"/>
    <property type="project" value="UniProtKB-SubCell"/>
</dbReference>
<dbReference type="GO" id="GO:0004430">
    <property type="term" value="F:1-phosphatidylinositol 4-kinase activity"/>
    <property type="evidence" value="ECO:0000314"/>
    <property type="project" value="UniProtKB"/>
</dbReference>
<dbReference type="GO" id="GO:0071889">
    <property type="term" value="F:14-3-3 protein binding"/>
    <property type="evidence" value="ECO:0000314"/>
    <property type="project" value="UniProtKB"/>
</dbReference>
<dbReference type="GO" id="GO:0005524">
    <property type="term" value="F:ATP binding"/>
    <property type="evidence" value="ECO:0007669"/>
    <property type="project" value="UniProtKB-KW"/>
</dbReference>
<dbReference type="GO" id="GO:0048839">
    <property type="term" value="P:inner ear development"/>
    <property type="evidence" value="ECO:0000315"/>
    <property type="project" value="UniProtKB"/>
</dbReference>
<dbReference type="GO" id="GO:0007040">
    <property type="term" value="P:lysosome organization"/>
    <property type="evidence" value="ECO:0000314"/>
    <property type="project" value="MGI"/>
</dbReference>
<dbReference type="GO" id="GO:0006661">
    <property type="term" value="P:phosphatidylinositol biosynthetic process"/>
    <property type="evidence" value="ECO:0000304"/>
    <property type="project" value="Reactome"/>
</dbReference>
<dbReference type="GO" id="GO:0046854">
    <property type="term" value="P:phosphatidylinositol phosphate biosynthetic process"/>
    <property type="evidence" value="ECO:0000318"/>
    <property type="project" value="GO_Central"/>
</dbReference>
<dbReference type="GO" id="GO:0048015">
    <property type="term" value="P:phosphatidylinositol-mediated signaling"/>
    <property type="evidence" value="ECO:0000318"/>
    <property type="project" value="GO_Central"/>
</dbReference>
<dbReference type="GO" id="GO:0006898">
    <property type="term" value="P:receptor-mediated endocytosis"/>
    <property type="evidence" value="ECO:0000304"/>
    <property type="project" value="ProtInc"/>
</dbReference>
<dbReference type="GO" id="GO:0007165">
    <property type="term" value="P:signal transduction"/>
    <property type="evidence" value="ECO:0000304"/>
    <property type="project" value="ProtInc"/>
</dbReference>
<dbReference type="CDD" id="cd22246">
    <property type="entry name" value="PI4KB_NTD"/>
    <property type="match status" value="1"/>
</dbReference>
<dbReference type="CDD" id="cd05168">
    <property type="entry name" value="PI4Kc_III_beta"/>
    <property type="match status" value="1"/>
</dbReference>
<dbReference type="FunFam" id="3.30.1010.10:FF:000031">
    <property type="entry name" value="Phosphatidylinositol 4-kinase beta"/>
    <property type="match status" value="1"/>
</dbReference>
<dbReference type="FunFam" id="1.10.1070.11:FF:000004">
    <property type="entry name" value="Phosphatidylinositol 4-kinase, catalytic, beta"/>
    <property type="match status" value="1"/>
</dbReference>
<dbReference type="Gene3D" id="1.10.1070.11">
    <property type="entry name" value="Phosphatidylinositol 3-/4-kinase, catalytic domain"/>
    <property type="match status" value="1"/>
</dbReference>
<dbReference type="Gene3D" id="3.30.1010.10">
    <property type="entry name" value="Phosphatidylinositol 3-kinase Catalytic Subunit, Chain A, domain 4"/>
    <property type="match status" value="1"/>
</dbReference>
<dbReference type="InterPro" id="IPR011009">
    <property type="entry name" value="Kinase-like_dom_sf"/>
</dbReference>
<dbReference type="InterPro" id="IPR000403">
    <property type="entry name" value="PI3/4_kinase_cat_dom"/>
</dbReference>
<dbReference type="InterPro" id="IPR036940">
    <property type="entry name" value="PI3/4_kinase_cat_sf"/>
</dbReference>
<dbReference type="InterPro" id="IPR018936">
    <property type="entry name" value="PI3/4_kinase_CS"/>
</dbReference>
<dbReference type="InterPro" id="IPR001263">
    <property type="entry name" value="PI3K_accessory_dom"/>
</dbReference>
<dbReference type="InterPro" id="IPR049160">
    <property type="entry name" value="PI4KB-PIK1_PIK"/>
</dbReference>
<dbReference type="InterPro" id="IPR015433">
    <property type="entry name" value="PI_Kinase"/>
</dbReference>
<dbReference type="PANTHER" id="PTHR10048:SF22">
    <property type="entry name" value="PHOSPHATIDYLINOSITOL 4-KINASE BETA"/>
    <property type="match status" value="1"/>
</dbReference>
<dbReference type="PANTHER" id="PTHR10048">
    <property type="entry name" value="PHOSPHATIDYLINOSITOL KINASE"/>
    <property type="match status" value="1"/>
</dbReference>
<dbReference type="Pfam" id="PF00454">
    <property type="entry name" value="PI3_PI4_kinase"/>
    <property type="match status" value="1"/>
</dbReference>
<dbReference type="Pfam" id="PF21245">
    <property type="entry name" value="PI4KB-PIK1_PIK"/>
    <property type="match status" value="1"/>
</dbReference>
<dbReference type="SMART" id="SM00146">
    <property type="entry name" value="PI3Kc"/>
    <property type="match status" value="1"/>
</dbReference>
<dbReference type="SUPFAM" id="SSF56112">
    <property type="entry name" value="Protein kinase-like (PK-like)"/>
    <property type="match status" value="1"/>
</dbReference>
<dbReference type="PROSITE" id="PS00915">
    <property type="entry name" value="PI3_4_KINASE_1"/>
    <property type="match status" value="1"/>
</dbReference>
<dbReference type="PROSITE" id="PS00916">
    <property type="entry name" value="PI3_4_KINASE_2"/>
    <property type="match status" value="1"/>
</dbReference>
<dbReference type="PROSITE" id="PS50290">
    <property type="entry name" value="PI3_4_KINASE_3"/>
    <property type="match status" value="1"/>
</dbReference>
<dbReference type="PROSITE" id="PS51545">
    <property type="entry name" value="PIK_HELICAL"/>
    <property type="match status" value="1"/>
</dbReference>
<keyword id="KW-0002">3D-structure</keyword>
<keyword id="KW-0007">Acetylation</keyword>
<keyword id="KW-0025">Alternative splicing</keyword>
<keyword id="KW-0067">ATP-binding</keyword>
<keyword id="KW-0963">Cytoplasm</keyword>
<keyword id="KW-0209">Deafness</keyword>
<keyword id="KW-0903">Direct protein sequencing</keyword>
<keyword id="KW-0225">Disease variant</keyword>
<keyword id="KW-0256">Endoplasmic reticulum</keyword>
<keyword id="KW-0333">Golgi apparatus</keyword>
<keyword id="KW-0945">Host-virus interaction</keyword>
<keyword id="KW-0418">Kinase</keyword>
<keyword id="KW-0443">Lipid metabolism</keyword>
<keyword id="KW-0472">Membrane</keyword>
<keyword id="KW-0496">Mitochondrion</keyword>
<keyword id="KW-1000">Mitochondrion outer membrane</keyword>
<keyword id="KW-1010">Non-syndromic deafness</keyword>
<keyword id="KW-0547">Nucleotide-binding</keyword>
<keyword id="KW-0597">Phosphoprotein</keyword>
<keyword id="KW-1267">Proteomics identification</keyword>
<keyword id="KW-1185">Reference proteome</keyword>
<keyword id="KW-0808">Transferase</keyword>
<reference evidence="30" key="1">
    <citation type="journal article" date="1997" name="DNA Res.">
        <title>Identification and characterization of a novel human phosphatidylinositol 4-kinase.</title>
        <authorList>
            <person name="Suzuki K."/>
            <person name="Hirano H."/>
            <person name="Okutomi K."/>
            <person name="Suzuki M."/>
            <person name="Kuga Y."/>
            <person name="Fujiwara T."/>
            <person name="Kanemoto N."/>
            <person name="Isono K."/>
            <person name="Horie M."/>
        </authorList>
    </citation>
    <scope>NUCLEOTIDE SEQUENCE [MRNA] (ISOFORM 1)</scope>
    <scope>FUNCTION</scope>
    <scope>SUBCELLULAR LOCATION</scope>
    <scope>TISSUE SPECIFICITY</scope>
    <source>
        <tissue>Fetal brain</tissue>
    </source>
</reference>
<reference evidence="30" key="2">
    <citation type="journal article" date="1997" name="DNA Res.">
        <title>Complementary DNA cloning and chromosomal mapping of a novel phosphatidylinositol kinase gene.</title>
        <authorList>
            <person name="Saito T."/>
            <person name="Seki N."/>
            <person name="Ishii H."/>
            <person name="Ohira M."/>
            <person name="Hayashi A."/>
            <person name="Kozuma S."/>
            <person name="Hori T.-A."/>
        </authorList>
    </citation>
    <scope>NUCLEOTIDE SEQUENCE [MRNA] (ISOFORM 1)</scope>
    <scope>TISSUE SPECIFICITY</scope>
    <source>
        <tissue evidence="36">Brain</tissue>
    </source>
</reference>
<reference evidence="30" key="3">
    <citation type="journal article" date="1997" name="J. Biol. Chem.">
        <title>Cloning and characterization of a wortmannin-sensitive human phosphatidylinositol 4-kinase.</title>
        <authorList>
            <person name="Meyers R."/>
            <person name="Cantley L.C."/>
        </authorList>
    </citation>
    <scope>NUCLEOTIDE SEQUENCE [MRNA] (ISOFORM 2)</scope>
    <scope>ACTIVITY REGULATION</scope>
    <scope>TISSUE SPECIFICITY</scope>
    <source>
        <tissue evidence="21">Heart</tissue>
    </source>
</reference>
<reference key="4">
    <citation type="journal article" date="2004" name="Nat. Genet.">
        <title>Complete sequencing and characterization of 21,243 full-length human cDNAs.</title>
        <authorList>
            <person name="Ota T."/>
            <person name="Suzuki Y."/>
            <person name="Nishikawa T."/>
            <person name="Otsuki T."/>
            <person name="Sugiyama T."/>
            <person name="Irie R."/>
            <person name="Wakamatsu A."/>
            <person name="Hayashi K."/>
            <person name="Sato H."/>
            <person name="Nagai K."/>
            <person name="Kimura K."/>
            <person name="Makita H."/>
            <person name="Sekine M."/>
            <person name="Obayashi M."/>
            <person name="Nishi T."/>
            <person name="Shibahara T."/>
            <person name="Tanaka T."/>
            <person name="Ishii S."/>
            <person name="Yamamoto J."/>
            <person name="Saito K."/>
            <person name="Kawai Y."/>
            <person name="Isono Y."/>
            <person name="Nakamura Y."/>
            <person name="Nagahari K."/>
            <person name="Murakami K."/>
            <person name="Yasuda T."/>
            <person name="Iwayanagi T."/>
            <person name="Wagatsuma M."/>
            <person name="Shiratori A."/>
            <person name="Sudo H."/>
            <person name="Hosoiri T."/>
            <person name="Kaku Y."/>
            <person name="Kodaira H."/>
            <person name="Kondo H."/>
            <person name="Sugawara M."/>
            <person name="Takahashi M."/>
            <person name="Kanda K."/>
            <person name="Yokoi T."/>
            <person name="Furuya T."/>
            <person name="Kikkawa E."/>
            <person name="Omura Y."/>
            <person name="Abe K."/>
            <person name="Kamihara K."/>
            <person name="Katsuta N."/>
            <person name="Sato K."/>
            <person name="Tanikawa M."/>
            <person name="Yamazaki M."/>
            <person name="Ninomiya K."/>
            <person name="Ishibashi T."/>
            <person name="Yamashita H."/>
            <person name="Murakawa K."/>
            <person name="Fujimori K."/>
            <person name="Tanai H."/>
            <person name="Kimata M."/>
            <person name="Watanabe M."/>
            <person name="Hiraoka S."/>
            <person name="Chiba Y."/>
            <person name="Ishida S."/>
            <person name="Ono Y."/>
            <person name="Takiguchi S."/>
            <person name="Watanabe S."/>
            <person name="Yosida M."/>
            <person name="Hotuta T."/>
            <person name="Kusano J."/>
            <person name="Kanehori K."/>
            <person name="Takahashi-Fujii A."/>
            <person name="Hara H."/>
            <person name="Tanase T.-O."/>
            <person name="Nomura Y."/>
            <person name="Togiya S."/>
            <person name="Komai F."/>
            <person name="Hara R."/>
            <person name="Takeuchi K."/>
            <person name="Arita M."/>
            <person name="Imose N."/>
            <person name="Musashino K."/>
            <person name="Yuuki H."/>
            <person name="Oshima A."/>
            <person name="Sasaki N."/>
            <person name="Aotsuka S."/>
            <person name="Yoshikawa Y."/>
            <person name="Matsunawa H."/>
            <person name="Ichihara T."/>
            <person name="Shiohata N."/>
            <person name="Sano S."/>
            <person name="Moriya S."/>
            <person name="Momiyama H."/>
            <person name="Satoh N."/>
            <person name="Takami S."/>
            <person name="Terashima Y."/>
            <person name="Suzuki O."/>
            <person name="Nakagawa S."/>
            <person name="Senoh A."/>
            <person name="Mizoguchi H."/>
            <person name="Goto Y."/>
            <person name="Shimizu F."/>
            <person name="Wakebe H."/>
            <person name="Hishigaki H."/>
            <person name="Watanabe T."/>
            <person name="Sugiyama A."/>
            <person name="Takemoto M."/>
            <person name="Kawakami B."/>
            <person name="Yamazaki M."/>
            <person name="Watanabe K."/>
            <person name="Kumagai A."/>
            <person name="Itakura S."/>
            <person name="Fukuzumi Y."/>
            <person name="Fujimori Y."/>
            <person name="Komiyama M."/>
            <person name="Tashiro H."/>
            <person name="Tanigami A."/>
            <person name="Fujiwara T."/>
            <person name="Ono T."/>
            <person name="Yamada K."/>
            <person name="Fujii Y."/>
            <person name="Ozaki K."/>
            <person name="Hirao M."/>
            <person name="Ohmori Y."/>
            <person name="Kawabata A."/>
            <person name="Hikiji T."/>
            <person name="Kobatake N."/>
            <person name="Inagaki H."/>
            <person name="Ikema Y."/>
            <person name="Okamoto S."/>
            <person name="Okitani R."/>
            <person name="Kawakami T."/>
            <person name="Noguchi S."/>
            <person name="Itoh T."/>
            <person name="Shigeta K."/>
            <person name="Senba T."/>
            <person name="Matsumura K."/>
            <person name="Nakajima Y."/>
            <person name="Mizuno T."/>
            <person name="Morinaga M."/>
            <person name="Sasaki M."/>
            <person name="Togashi T."/>
            <person name="Oyama M."/>
            <person name="Hata H."/>
            <person name="Watanabe M."/>
            <person name="Komatsu T."/>
            <person name="Mizushima-Sugano J."/>
            <person name="Satoh T."/>
            <person name="Shirai Y."/>
            <person name="Takahashi Y."/>
            <person name="Nakagawa K."/>
            <person name="Okumura K."/>
            <person name="Nagase T."/>
            <person name="Nomura N."/>
            <person name="Kikuchi H."/>
            <person name="Masuho Y."/>
            <person name="Yamashita R."/>
            <person name="Nakai K."/>
            <person name="Yada T."/>
            <person name="Nakamura Y."/>
            <person name="Ohara O."/>
            <person name="Isogai T."/>
            <person name="Sugano S."/>
        </authorList>
    </citation>
    <scope>NUCLEOTIDE SEQUENCE [LARGE SCALE MRNA] (ISOFORM 3)</scope>
    <source>
        <tissue>Brain</tissue>
    </source>
</reference>
<reference key="5">
    <citation type="journal article" date="2006" name="Nature">
        <title>The DNA sequence and biological annotation of human chromosome 1.</title>
        <authorList>
            <person name="Gregory S.G."/>
            <person name="Barlow K.F."/>
            <person name="McLay K.E."/>
            <person name="Kaul R."/>
            <person name="Swarbreck D."/>
            <person name="Dunham A."/>
            <person name="Scott C.E."/>
            <person name="Howe K.L."/>
            <person name="Woodfine K."/>
            <person name="Spencer C.C.A."/>
            <person name="Jones M.C."/>
            <person name="Gillson C."/>
            <person name="Searle S."/>
            <person name="Zhou Y."/>
            <person name="Kokocinski F."/>
            <person name="McDonald L."/>
            <person name="Evans R."/>
            <person name="Phillips K."/>
            <person name="Atkinson A."/>
            <person name="Cooper R."/>
            <person name="Jones C."/>
            <person name="Hall R.E."/>
            <person name="Andrews T.D."/>
            <person name="Lloyd C."/>
            <person name="Ainscough R."/>
            <person name="Almeida J.P."/>
            <person name="Ambrose K.D."/>
            <person name="Anderson F."/>
            <person name="Andrew R.W."/>
            <person name="Ashwell R.I.S."/>
            <person name="Aubin K."/>
            <person name="Babbage A.K."/>
            <person name="Bagguley C.L."/>
            <person name="Bailey J."/>
            <person name="Beasley H."/>
            <person name="Bethel G."/>
            <person name="Bird C.P."/>
            <person name="Bray-Allen S."/>
            <person name="Brown J.Y."/>
            <person name="Brown A.J."/>
            <person name="Buckley D."/>
            <person name="Burton J."/>
            <person name="Bye J."/>
            <person name="Carder C."/>
            <person name="Chapman J.C."/>
            <person name="Clark S.Y."/>
            <person name="Clarke G."/>
            <person name="Clee C."/>
            <person name="Cobley V."/>
            <person name="Collier R.E."/>
            <person name="Corby N."/>
            <person name="Coville G.J."/>
            <person name="Davies J."/>
            <person name="Deadman R."/>
            <person name="Dunn M."/>
            <person name="Earthrowl M."/>
            <person name="Ellington A.G."/>
            <person name="Errington H."/>
            <person name="Frankish A."/>
            <person name="Frankland J."/>
            <person name="French L."/>
            <person name="Garner P."/>
            <person name="Garnett J."/>
            <person name="Gay L."/>
            <person name="Ghori M.R.J."/>
            <person name="Gibson R."/>
            <person name="Gilby L.M."/>
            <person name="Gillett W."/>
            <person name="Glithero R.J."/>
            <person name="Grafham D.V."/>
            <person name="Griffiths C."/>
            <person name="Griffiths-Jones S."/>
            <person name="Grocock R."/>
            <person name="Hammond S."/>
            <person name="Harrison E.S.I."/>
            <person name="Hart E."/>
            <person name="Haugen E."/>
            <person name="Heath P.D."/>
            <person name="Holmes S."/>
            <person name="Holt K."/>
            <person name="Howden P.J."/>
            <person name="Hunt A.R."/>
            <person name="Hunt S.E."/>
            <person name="Hunter G."/>
            <person name="Isherwood J."/>
            <person name="James R."/>
            <person name="Johnson C."/>
            <person name="Johnson D."/>
            <person name="Joy A."/>
            <person name="Kay M."/>
            <person name="Kershaw J.K."/>
            <person name="Kibukawa M."/>
            <person name="Kimberley A.M."/>
            <person name="King A."/>
            <person name="Knights A.J."/>
            <person name="Lad H."/>
            <person name="Laird G."/>
            <person name="Lawlor S."/>
            <person name="Leongamornlert D.A."/>
            <person name="Lloyd D.M."/>
            <person name="Loveland J."/>
            <person name="Lovell J."/>
            <person name="Lush M.J."/>
            <person name="Lyne R."/>
            <person name="Martin S."/>
            <person name="Mashreghi-Mohammadi M."/>
            <person name="Matthews L."/>
            <person name="Matthews N.S.W."/>
            <person name="McLaren S."/>
            <person name="Milne S."/>
            <person name="Mistry S."/>
            <person name="Moore M.J.F."/>
            <person name="Nickerson T."/>
            <person name="O'Dell C.N."/>
            <person name="Oliver K."/>
            <person name="Palmeiri A."/>
            <person name="Palmer S.A."/>
            <person name="Parker A."/>
            <person name="Patel D."/>
            <person name="Pearce A.V."/>
            <person name="Peck A.I."/>
            <person name="Pelan S."/>
            <person name="Phelps K."/>
            <person name="Phillimore B.J."/>
            <person name="Plumb R."/>
            <person name="Rajan J."/>
            <person name="Raymond C."/>
            <person name="Rouse G."/>
            <person name="Saenphimmachak C."/>
            <person name="Sehra H.K."/>
            <person name="Sheridan E."/>
            <person name="Shownkeen R."/>
            <person name="Sims S."/>
            <person name="Skuce C.D."/>
            <person name="Smith M."/>
            <person name="Steward C."/>
            <person name="Subramanian S."/>
            <person name="Sycamore N."/>
            <person name="Tracey A."/>
            <person name="Tromans A."/>
            <person name="Van Helmond Z."/>
            <person name="Wall M."/>
            <person name="Wallis J.M."/>
            <person name="White S."/>
            <person name="Whitehead S.L."/>
            <person name="Wilkinson J.E."/>
            <person name="Willey D.L."/>
            <person name="Williams H."/>
            <person name="Wilming L."/>
            <person name="Wray P.W."/>
            <person name="Wu Z."/>
            <person name="Coulson A."/>
            <person name="Vaudin M."/>
            <person name="Sulston J.E."/>
            <person name="Durbin R.M."/>
            <person name="Hubbard T."/>
            <person name="Wooster R."/>
            <person name="Dunham I."/>
            <person name="Carter N.P."/>
            <person name="McVean G."/>
            <person name="Ross M.T."/>
            <person name="Harrow J."/>
            <person name="Olson M.V."/>
            <person name="Beck S."/>
            <person name="Rogers J."/>
            <person name="Bentley D.R."/>
        </authorList>
    </citation>
    <scope>NUCLEOTIDE SEQUENCE [LARGE SCALE GENOMIC DNA]</scope>
</reference>
<reference key="6">
    <citation type="submission" date="2005-09" db="EMBL/GenBank/DDBJ databases">
        <authorList>
            <person name="Mural R.J."/>
            <person name="Istrail S."/>
            <person name="Sutton G.G."/>
            <person name="Florea L."/>
            <person name="Halpern A.L."/>
            <person name="Mobarry C.M."/>
            <person name="Lippert R."/>
            <person name="Walenz B."/>
            <person name="Shatkay H."/>
            <person name="Dew I."/>
            <person name="Miller J.R."/>
            <person name="Flanigan M.J."/>
            <person name="Edwards N.J."/>
            <person name="Bolanos R."/>
            <person name="Fasulo D."/>
            <person name="Halldorsson B.V."/>
            <person name="Hannenhalli S."/>
            <person name="Turner R."/>
            <person name="Yooseph S."/>
            <person name="Lu F."/>
            <person name="Nusskern D.R."/>
            <person name="Shue B.C."/>
            <person name="Zheng X.H."/>
            <person name="Zhong F."/>
            <person name="Delcher A.L."/>
            <person name="Huson D.H."/>
            <person name="Kravitz S.A."/>
            <person name="Mouchard L."/>
            <person name="Reinert K."/>
            <person name="Remington K.A."/>
            <person name="Clark A.G."/>
            <person name="Waterman M.S."/>
            <person name="Eichler E.E."/>
            <person name="Adams M.D."/>
            <person name="Hunkapiller M.W."/>
            <person name="Myers E.W."/>
            <person name="Venter J.C."/>
        </authorList>
    </citation>
    <scope>NUCLEOTIDE SEQUENCE [LARGE SCALE GENOMIC DNA]</scope>
</reference>
<reference key="7">
    <citation type="journal article" date="2004" name="Genome Res.">
        <title>The status, quality, and expansion of the NIH full-length cDNA project: the Mammalian Gene Collection (MGC).</title>
        <authorList>
            <consortium name="The MGC Project Team"/>
        </authorList>
    </citation>
    <scope>NUCLEOTIDE SEQUENCE [LARGE SCALE MRNA] (ISOFORM 2)</scope>
    <source>
        <tissue evidence="34">Brain</tissue>
        <tissue evidence="35">Testis</tissue>
    </source>
</reference>
<reference key="8">
    <citation type="journal article" date="2013" name="MBio">
        <title>ACBD3 interaction with TBC1 domain 22 protein is differentially affected by enteroviral and kobuviral 3A protein binding.</title>
        <authorList>
            <person name="Greninger A.L."/>
            <person name="Knudsen G.M."/>
            <person name="Betegon M."/>
            <person name="Burlingame A.L."/>
            <person name="DeRisi J.L."/>
        </authorList>
    </citation>
    <scope>PROTEIN SEQUENCE OF 2-118; 121-229; 236-303; 319-442; 497-798 AND 804-816 (ISOFORM 2)</scope>
    <scope>CLEAVAGE OF INITIATOR METHIONINE</scope>
    <scope>ACETYLATION AT GLY-2</scope>
    <scope>PHOSPHORYLATION AT SER-294</scope>
    <scope>INTERACTION WITH ACBD3; ARMH3; RAB11B; YWHAB; YWHAE; YWHAG; YWHAH; YWHAQ; YWHAZ AND SFN</scope>
    <scope>MUTAGENESIS OF 40-LEU--VAL-42; 43-ILE--PRO-45; 46-GLU-VAL-47; 49-GLN-LYS-50; CYS-52; 53-GLN-GLU-54; 55-VAL-LEU-56 AND 57-GLU--VAL-59</scope>
    <scope>MASS SPECTROMETRY</scope>
</reference>
<reference key="9">
    <citation type="journal article" date="1997" name="J. Biol. Chem.">
        <title>Subcellular locations of phosphatidylinositol 4-kinase isoforms.</title>
        <authorList>
            <person name="Wong K."/>
            <person name="Meyers R."/>
            <person name="Cantley L.C."/>
        </authorList>
    </citation>
    <scope>SUBCELLULAR LOCATION</scope>
</reference>
<reference key="10">
    <citation type="journal article" date="1999" name="Nat. Cell Biol.">
        <title>ARF mediates recruitment of PtdIns-4-OH kinase-beta and stimulates synthesis of PtdIns(4,5)P2 on the Golgi complex.</title>
        <authorList>
            <person name="Godi A."/>
            <person name="Pertile P."/>
            <person name="Meyers R."/>
            <person name="Marra P."/>
            <person name="Di Tullio G."/>
            <person name="Iurisci C."/>
            <person name="Luini A."/>
            <person name="Corda D."/>
            <person name="De Matteis M.A."/>
        </authorList>
    </citation>
    <scope>FUNCTION</scope>
</reference>
<reference key="11">
    <citation type="journal article" date="2001" name="Eur. J. Biochem.">
        <title>Human phosphatidylinositol 4-kinase isoform PI4K92. Expression of the recombinant enzyme and determination of multiple phosphorylation sites.</title>
        <authorList>
            <person name="Suer S."/>
            <person name="Sickmann A."/>
            <person name="Meyer H.E."/>
            <person name="Herberg F.W."/>
            <person name="Heilmeyer L.M.G. Jr."/>
        </authorList>
    </citation>
    <scope>FUNCTION</scope>
    <scope>CATALYTIC ACTIVITY</scope>
    <scope>BIOPHYSICOCHEMICAL PROPERTIES</scope>
    <scope>ACTIVITY REGULATION</scope>
    <scope>COFACTOR</scope>
    <scope>PHOSPHORYLATION AT SER-258; THR-263; SER-266; SER-277; SER-294; THR-438; SER-511 AND THR-519</scope>
</reference>
<reference key="12">
    <citation type="journal article" date="2003" name="IUBMB Life">
        <title>Mammalian phosphatidylinositol 4-kinases.</title>
        <authorList>
            <person name="Heilmeyer L.M.G. Jr."/>
            <person name="Vereb G. Jr."/>
            <person name="Vereb G."/>
            <person name="Kakuk A."/>
            <person name="Szivak I."/>
        </authorList>
    </citation>
    <scope>FUNCTION</scope>
</reference>
<reference key="13">
    <citation type="journal article" date="2006" name="Cell">
        <title>Global, in vivo, and site-specific phosphorylation dynamics in signaling networks.</title>
        <authorList>
            <person name="Olsen J.V."/>
            <person name="Blagoev B."/>
            <person name="Gnad F."/>
            <person name="Macek B."/>
            <person name="Kumar C."/>
            <person name="Mortensen P."/>
            <person name="Mann M."/>
        </authorList>
    </citation>
    <scope>PHOSPHORYLATION [LARGE SCALE ANALYSIS] AT SER-428</scope>
    <scope>IDENTIFICATION BY MASS SPECTROMETRY [LARGE SCALE ANALYSIS]</scope>
    <source>
        <tissue>Cervix carcinoma</tissue>
    </source>
</reference>
<reference key="14">
    <citation type="journal article" date="2007" name="Traffic">
        <title>Specificity, promiscuity and localization of ARF protein interactions with NCS-1 and phosphatidylinositol-4 kinase-III beta.</title>
        <authorList>
            <person name="Haynes L.P."/>
            <person name="Sherwood M.W."/>
            <person name="Dolman N.J."/>
            <person name="Burgoyne R.D."/>
        </authorList>
    </citation>
    <scope>INTERACTION WITH ARF1 AND ARF3</scope>
    <scope>SUBCELLULAR LOCATION</scope>
</reference>
<reference key="15">
    <citation type="journal article" date="2008" name="J. Proteome Res.">
        <title>Combining protein-based IMAC, peptide-based IMAC, and MudPIT for efficient phosphoproteomic analysis.</title>
        <authorList>
            <person name="Cantin G.T."/>
            <person name="Yi W."/>
            <person name="Lu B."/>
            <person name="Park S.K."/>
            <person name="Xu T."/>
            <person name="Lee J.-D."/>
            <person name="Yates J.R. III"/>
        </authorList>
    </citation>
    <scope>PHOSPHORYLATION [LARGE SCALE ANALYSIS] AT SER-511</scope>
    <scope>IDENTIFICATION BY MASS SPECTROMETRY [LARGE SCALE ANALYSIS]</scope>
    <source>
        <tissue>Cervix carcinoma</tissue>
    </source>
</reference>
<reference key="16">
    <citation type="journal article" date="2008" name="Proc. Natl. Acad. Sci. U.S.A.">
        <title>A quantitative atlas of mitotic phosphorylation.</title>
        <authorList>
            <person name="Dephoure N."/>
            <person name="Zhou C."/>
            <person name="Villen J."/>
            <person name="Beausoleil S.A."/>
            <person name="Bakalarski C.E."/>
            <person name="Elledge S.J."/>
            <person name="Gygi S.P."/>
        </authorList>
    </citation>
    <scope>PHOSPHORYLATION [LARGE SCALE ANALYSIS] AT SER-258; SER-277; SER-428 AND SER-511</scope>
    <scope>PHOSPHORYLATION [LARGE SCALE ANALYSIS] AT SER-294 (ISOFORM 2)</scope>
    <scope>IDENTIFICATION BY MASS SPECTROMETRY [LARGE SCALE ANALYSIS]</scope>
    <source>
        <tissue>Cervix carcinoma</tissue>
    </source>
</reference>
<reference key="17">
    <citation type="journal article" date="2009" name="Sci. Signal.">
        <title>Quantitative phosphoproteomic analysis of T cell receptor signaling reveals system-wide modulation of protein-protein interactions.</title>
        <authorList>
            <person name="Mayya V."/>
            <person name="Lundgren D.H."/>
            <person name="Hwang S.-I."/>
            <person name="Rezaul K."/>
            <person name="Wu L."/>
            <person name="Eng J.K."/>
            <person name="Rodionov V."/>
            <person name="Han D.K."/>
        </authorList>
    </citation>
    <scope>PHOSPHORYLATION [LARGE SCALE ANALYSIS] AT SER-428</scope>
    <scope>IDENTIFICATION BY MASS SPECTROMETRY [LARGE SCALE ANALYSIS]</scope>
    <source>
        <tissue>Leukemic T-cell</tissue>
    </source>
</reference>
<reference key="18">
    <citation type="journal article" date="2010" name="Sci. Signal.">
        <title>Quantitative phosphoproteomics reveals widespread full phosphorylation site occupancy during mitosis.</title>
        <authorList>
            <person name="Olsen J.V."/>
            <person name="Vermeulen M."/>
            <person name="Santamaria A."/>
            <person name="Kumar C."/>
            <person name="Miller M.L."/>
            <person name="Jensen L.J."/>
            <person name="Gnad F."/>
            <person name="Cox J."/>
            <person name="Jensen T.S."/>
            <person name="Nigg E.A."/>
            <person name="Brunak S."/>
            <person name="Mann M."/>
        </authorList>
    </citation>
    <scope>PHOSPHORYLATION [LARGE SCALE ANALYSIS] AT SER-258; SER-266 AND SER-428</scope>
    <scope>IDENTIFICATION BY MASS SPECTROMETRY [LARGE SCALE ANALYSIS]</scope>
    <source>
        <tissue>Cervix carcinoma</tissue>
    </source>
</reference>
<reference key="19">
    <citation type="journal article" date="2011" name="BMC Syst. Biol.">
        <title>Initial characterization of the human central proteome.</title>
        <authorList>
            <person name="Burkard T.R."/>
            <person name="Planyavsky M."/>
            <person name="Kaupe I."/>
            <person name="Breitwieser F.P."/>
            <person name="Buerckstuemmer T."/>
            <person name="Bennett K.L."/>
            <person name="Superti-Furga G."/>
            <person name="Colinge J."/>
        </authorList>
    </citation>
    <scope>IDENTIFICATION BY MASS SPECTROMETRY [LARGE SCALE ANALYSIS]</scope>
</reference>
<reference key="20">
    <citation type="journal article" date="2011" name="Sci. Signal.">
        <title>System-wide temporal characterization of the proteome and phosphoproteome of human embryonic stem cell differentiation.</title>
        <authorList>
            <person name="Rigbolt K.T."/>
            <person name="Prokhorova T.A."/>
            <person name="Akimov V."/>
            <person name="Henningsen J."/>
            <person name="Johansen P.T."/>
            <person name="Kratchmarova I."/>
            <person name="Kassem M."/>
            <person name="Mann M."/>
            <person name="Olsen J.V."/>
            <person name="Blagoev B."/>
        </authorList>
    </citation>
    <scope>PHOSPHORYLATION [LARGE SCALE ANALYSIS] AT SER-428</scope>
    <scope>IDENTIFICATION BY MASS SPECTROMETRY [LARGE SCALE ANALYSIS]</scope>
</reference>
<reference key="21">
    <citation type="journal article" date="2012" name="EMBO J.">
        <title>ACBD3-mediated recruitment of PI4KB to picornavirus RNA replication sites.</title>
        <authorList>
            <person name="Sasaki J."/>
            <person name="Ishikawa K."/>
            <person name="Arita M."/>
            <person name="Taniguchi K."/>
        </authorList>
    </citation>
    <scope>FUNCTION (MICROBIAL INFECTION)</scope>
    <scope>SUBCELLULAR LOCATION</scope>
    <scope>IDENTIFICATION IN A COMPLEX AICHI VIRUS PROTEIN 3A/ACBD3/PI4KB (MICROBIAL INFECTION)</scope>
    <scope>INTERACTION WITH ACBD3</scope>
</reference>
<reference key="22">
    <citation type="journal article" date="2012" name="J. Biol. Chem.">
        <title>Phosphatidylinositol 4-kinase IIIbeta is required for severe acute respiratory syndrome coronavirus spike-mediated cell entry.</title>
        <authorList>
            <person name="Yang N."/>
            <person name="Ma P."/>
            <person name="Lang J."/>
            <person name="Zhang Y."/>
            <person name="Deng J."/>
            <person name="Ju X."/>
            <person name="Zhang G."/>
            <person name="Jiang C."/>
        </authorList>
    </citation>
    <scope>FUNCTION (MICROBIAL INFECTION)</scope>
</reference>
<reference key="23">
    <citation type="journal article" date="2012" name="J. Virol.">
        <title>The 3A protein from multiple picornaviruses utilizes the golgi adaptor protein ACBD3 to recruit PI4KIIIbeta.</title>
        <authorList>
            <person name="Greninger A.L."/>
            <person name="Knudsen G.M."/>
            <person name="Betegon M."/>
            <person name="Burlingame A.L."/>
            <person name="Derisi J.L."/>
        </authorList>
    </citation>
    <scope>FUNCTION (MICROBIAL INFECTION)</scope>
    <scope>INTERACTION WITH AICHI VIRUS PROTEIN 3A (MICROBIAL INFECTION)</scope>
    <scope>IDENTIFICATION IN A COMPLEX AICHI VIRUS PROTEIN 3A/ACBD3/PI4KB (MICROBIAL INFECTION)</scope>
    <scope>INTERACTION WITH ACBD3</scope>
</reference>
<reference key="24">
    <citation type="journal article" date="2013" name="J. Proteome Res.">
        <title>Toward a comprehensive characterization of a human cancer cell phosphoproteome.</title>
        <authorList>
            <person name="Zhou H."/>
            <person name="Di Palma S."/>
            <person name="Preisinger C."/>
            <person name="Peng M."/>
            <person name="Polat A.N."/>
            <person name="Heck A.J."/>
            <person name="Mohammed S."/>
        </authorList>
    </citation>
    <scope>PHOSPHORYLATION [LARGE SCALE ANALYSIS] AT SER-258; SER-266; SER-277; SER-428; SER-511 AND THR-517</scope>
    <scope>IDENTIFICATION BY MASS SPECTROMETRY [LARGE SCALE ANALYSIS]</scope>
    <source>
        <tissue>Cervix carcinoma</tissue>
        <tissue>Erythroleukemia</tissue>
    </source>
</reference>
<reference key="25">
    <citation type="journal article" date="2014" name="J. Virol.">
        <title>A complex comprising phosphatidylinositol 4-kinase IIIbeta, ACBD3, and Aichi virus proteins enhances phosphatidylinositol 4-phosphate synthesis and is critical for formation of the viral replication complex.</title>
        <authorList>
            <person name="Ishikawa-Sasaki K."/>
            <person name="Sasaki J."/>
            <person name="Taniguchi K."/>
        </authorList>
    </citation>
    <scope>SUBCELLULAR LOCATION</scope>
    <scope>ACTIVITY REGULATION (MICROBIAL INFECTION)</scope>
</reference>
<reference key="26">
    <citation type="journal article" date="2014" name="J. Proteomics">
        <title>An enzyme assisted RP-RPLC approach for in-depth analysis of human liver phosphoproteome.</title>
        <authorList>
            <person name="Bian Y."/>
            <person name="Song C."/>
            <person name="Cheng K."/>
            <person name="Dong M."/>
            <person name="Wang F."/>
            <person name="Huang J."/>
            <person name="Sun D."/>
            <person name="Wang L."/>
            <person name="Ye M."/>
            <person name="Zou H."/>
        </authorList>
    </citation>
    <scope>IDENTIFICATION BY MASS SPECTROMETRY [LARGE SCALE ANALYSIS]</scope>
    <source>
        <tissue>Liver</tissue>
    </source>
</reference>
<reference key="27">
    <citation type="journal article" date="2017" name="Proc. Natl. Acad. Sci. U.S.A.">
        <title>Conserved role for Gga proteins in phosphatidylinositol 4-kinase localization to the trans-Golgi network.</title>
        <authorList>
            <person name="Daboussi L."/>
            <person name="Costaguta G."/>
            <person name="Ghukasyan R."/>
            <person name="Payne G.S."/>
        </authorList>
    </citation>
    <scope>INTERACTION WITH GGA2</scope>
    <scope>SUBCELLULAR LOCATION</scope>
</reference>
<reference key="28">
    <citation type="journal article" date="2017" name="Structure">
        <title>The molecular basis of Aichi virus 3A protein activation of phosphatidylinositol 4 kinase IIIbeta, PI4KB, through ACBD3.</title>
        <authorList>
            <person name="McPhail J.A."/>
            <person name="Ottosen E.H."/>
            <person name="Jenkins M.L."/>
            <person name="Burke J.E."/>
        </authorList>
    </citation>
    <scope>INTERACTION WITH ACBD3</scope>
    <scope>MUTAGENESIS OF ILE-43 AND ASP-44</scope>
    <scope>FUNCTION (MICROBIAL INFECTION)</scope>
    <scope>IDENTIFICATION IN A COMPLEX PROTEIN 3A/ACBD3/PI4KB (MICROBIAL INFECTION)</scope>
    <scope>ACTIVITY REGULATION (MICROBIAL INFECTION)</scope>
</reference>
<reference key="29">
    <citation type="journal article" date="2019" name="J. Cell Biol.">
        <title>ATG9A shapes the forming autophagosome through Arfaptin 2 and phosphatidylinositol 4-kinase IIIbeta.</title>
        <authorList>
            <person name="Judith D."/>
            <person name="Jefferies H.B.J."/>
            <person name="Boeing S."/>
            <person name="Frith D."/>
            <person name="Snijders A.P."/>
            <person name="Tooze S.A."/>
        </authorList>
    </citation>
    <scope>INTERACTION WITH ATG9A</scope>
</reference>
<reference key="30">
    <citation type="journal article" date="2020" name="J. Genet. Genomics">
        <title>Phosphatidylinositol 4-kinase beta mutations cause nonsyndromic sensorineural deafness and inner ear malformation.</title>
        <authorList>
            <person name="Su X."/>
            <person name="Feng Y."/>
            <person name="Rahman S.A."/>
            <person name="Wu S."/>
            <person name="Li G."/>
            <person name="Rueschendorf F."/>
            <person name="Zhao L."/>
            <person name="Cui H."/>
            <person name="Liang J."/>
            <person name="Fang L."/>
            <person name="Hu H."/>
            <person name="Froehler S."/>
            <person name="Yu Y."/>
            <person name="Patone G."/>
            <person name="Hummel O."/>
            <person name="Chen Q."/>
            <person name="Raile K."/>
            <person name="Luft F.C."/>
            <person name="Baehring S."/>
            <person name="Hussain K."/>
            <person name="Chen W."/>
            <person name="Zhang J."/>
            <person name="Gong M."/>
        </authorList>
    </citation>
    <scope>INVOLVEMENT IN DFNA87</scope>
    <scope>VARIANTS DFNA87 ARG-121; GLY-449; LYS-682 AND ARG-754</scope>
    <scope>FUNCTION</scope>
    <scope>TISSUE SPECIFICITY</scope>
    <scope>DEVELOPMENTAL STAGE</scope>
    <scope>CHARACTERIZATION OF VARIANTS DFNA87 ARG-121; GLY-449; LYS-682 AND ARG-754</scope>
</reference>
<reference key="31">
    <citation type="journal article" date="2016" name="Sci. Rep.">
        <title>Structural insights and in vitro reconstitution of membrane targeting and activation of human PI4KB by the ACBD3 protein.</title>
        <authorList>
            <person name="Klima M."/>
            <person name="Toth D.J."/>
            <person name="Hexnerova R."/>
            <person name="Baumlova A."/>
            <person name="Chalupska D."/>
            <person name="Tykvart J."/>
            <person name="Rezabkova L."/>
            <person name="Sengupta N."/>
            <person name="Man P."/>
            <person name="Dubankova A."/>
            <person name="Humpolickova J."/>
            <person name="Nencka R."/>
            <person name="Veverka V."/>
            <person name="Balla T."/>
            <person name="Boura E."/>
        </authorList>
    </citation>
    <scope>STRUCTURE BY NMR OF 1-68 IN COMPLEX WITH ACBD3</scope>
    <scope>INTERACTION WITH ACBD3</scope>
    <scope>MUTAGENESIS OF VAL-42; ILE-43; VAL-47; VAL-55 AND LEU-56</scope>
</reference>
<evidence type="ECO:0000250" key="1">
    <source>
        <dbReference type="UniProtKB" id="O02810"/>
    </source>
</evidence>
<evidence type="ECO:0000250" key="2">
    <source>
        <dbReference type="UniProtKB" id="O08561"/>
    </source>
</evidence>
<evidence type="ECO:0000250" key="3">
    <source>
        <dbReference type="UniProtKB" id="Q8BKC8"/>
    </source>
</evidence>
<evidence type="ECO:0000255" key="4">
    <source>
        <dbReference type="PROSITE-ProRule" id="PRU00269"/>
    </source>
</evidence>
<evidence type="ECO:0000255" key="5">
    <source>
        <dbReference type="PROSITE-ProRule" id="PRU00878"/>
    </source>
</evidence>
<evidence type="ECO:0000256" key="6">
    <source>
        <dbReference type="SAM" id="MobiDB-lite"/>
    </source>
</evidence>
<evidence type="ECO:0000269" key="7">
    <source>
    </source>
</evidence>
<evidence type="ECO:0000269" key="8">
    <source>
    </source>
</evidence>
<evidence type="ECO:0000269" key="9">
    <source>
    </source>
</evidence>
<evidence type="ECO:0000269" key="10">
    <source>
    </source>
</evidence>
<evidence type="ECO:0000269" key="11">
    <source>
    </source>
</evidence>
<evidence type="ECO:0000269" key="12">
    <source>
    </source>
</evidence>
<evidence type="ECO:0000269" key="13">
    <source>
    </source>
</evidence>
<evidence type="ECO:0000269" key="14">
    <source>
    </source>
</evidence>
<evidence type="ECO:0000269" key="15">
    <source>
    </source>
</evidence>
<evidence type="ECO:0000269" key="16">
    <source>
    </source>
</evidence>
<evidence type="ECO:0000269" key="17">
    <source>
    </source>
</evidence>
<evidence type="ECO:0000269" key="18">
    <source>
    </source>
</evidence>
<evidence type="ECO:0000269" key="19">
    <source>
    </source>
</evidence>
<evidence type="ECO:0000269" key="20">
    <source>
    </source>
</evidence>
<evidence type="ECO:0000269" key="21">
    <source>
    </source>
</evidence>
<evidence type="ECO:0000269" key="22">
    <source>
    </source>
</evidence>
<evidence type="ECO:0000269" key="23">
    <source>
    </source>
</evidence>
<evidence type="ECO:0000303" key="24">
    <source>
    </source>
</evidence>
<evidence type="ECO:0000303" key="25">
    <source>
    </source>
</evidence>
<evidence type="ECO:0000303" key="26">
    <source>
    </source>
</evidence>
<evidence type="ECO:0000303" key="27">
    <source>
    </source>
</evidence>
<evidence type="ECO:0000303" key="28">
    <source>
    </source>
</evidence>
<evidence type="ECO:0000303" key="29">
    <source>
    </source>
</evidence>
<evidence type="ECO:0000305" key="30"/>
<evidence type="ECO:0000305" key="31">
    <source>
    </source>
</evidence>
<evidence type="ECO:0000305" key="32">
    <source>
    </source>
</evidence>
<evidence type="ECO:0000312" key="33">
    <source>
        <dbReference type="EMBL" id="AAC51156.1"/>
    </source>
</evidence>
<evidence type="ECO:0000312" key="34">
    <source>
        <dbReference type="EMBL" id="AAH00029.1"/>
    </source>
</evidence>
<evidence type="ECO:0000312" key="35">
    <source>
        <dbReference type="EMBL" id="AAH40300.1"/>
    </source>
</evidence>
<evidence type="ECO:0000312" key="36">
    <source>
        <dbReference type="EMBL" id="BAA21661.1"/>
    </source>
</evidence>
<evidence type="ECO:0000312" key="37">
    <source>
        <dbReference type="HGNC" id="HGNC:8984"/>
    </source>
</evidence>
<evidence type="ECO:0007744" key="38">
    <source>
    </source>
</evidence>
<evidence type="ECO:0007744" key="39">
    <source>
    </source>
</evidence>
<evidence type="ECO:0007744" key="40">
    <source>
    </source>
</evidence>
<evidence type="ECO:0007744" key="41">
    <source>
    </source>
</evidence>
<evidence type="ECO:0007744" key="42">
    <source>
    </source>
</evidence>
<evidence type="ECO:0007744" key="43">
    <source>
    </source>
</evidence>
<evidence type="ECO:0007744" key="44">
    <source>
    </source>
</evidence>
<evidence type="ECO:0007829" key="45">
    <source>
        <dbReference type="PDB" id="2N73"/>
    </source>
</evidence>
<evidence type="ECO:0007829" key="46">
    <source>
        <dbReference type="PDB" id="4WAE"/>
    </source>
</evidence>
<evidence type="ECO:0007829" key="47">
    <source>
        <dbReference type="PDB" id="5C46"/>
    </source>
</evidence>
<evidence type="ECO:0007829" key="48">
    <source>
        <dbReference type="PDB" id="6GL3"/>
    </source>
</evidence>
<evidence type="ECO:0007829" key="49">
    <source>
        <dbReference type="PDB" id="8Q6F"/>
    </source>
</evidence>
<evidence type="ECO:0007829" key="50">
    <source>
        <dbReference type="PDB" id="8Q6G"/>
    </source>
</evidence>
<organism evidence="33">
    <name type="scientific">Homo sapiens</name>
    <name type="common">Human</name>
    <dbReference type="NCBI Taxonomy" id="9606"/>
    <lineage>
        <taxon>Eukaryota</taxon>
        <taxon>Metazoa</taxon>
        <taxon>Chordata</taxon>
        <taxon>Craniata</taxon>
        <taxon>Vertebrata</taxon>
        <taxon>Euteleostomi</taxon>
        <taxon>Mammalia</taxon>
        <taxon>Eutheria</taxon>
        <taxon>Euarchontoglires</taxon>
        <taxon>Primates</taxon>
        <taxon>Haplorrhini</taxon>
        <taxon>Catarrhini</taxon>
        <taxon>Hominidae</taxon>
        <taxon>Homo</taxon>
    </lineage>
</organism>
<gene>
    <name evidence="37" type="primary">PI4KB</name>
    <name type="synonym">PIK4CB</name>
</gene>
<protein>
    <recommendedName>
        <fullName evidence="30">Phosphatidylinositol 4-kinase beta</fullName>
        <shortName>PI4K-beta</shortName>
        <shortName>PI4Kbeta</shortName>
        <shortName>PtdIns 4-kinase beta</shortName>
        <ecNumber evidence="8 22">2.7.1.67</ecNumber>
    </recommendedName>
    <alternativeName>
        <fullName>NPIK</fullName>
    </alternativeName>
    <alternativeName>
        <fullName>PI4K92</fullName>
    </alternativeName>
    <alternativeName>
        <fullName evidence="26 27">PI4KIII</fullName>
    </alternativeName>
</protein>
<comment type="function">
    <text evidence="2 7 8 9 20 22">Phosphorylates phosphatidylinositol (PI) in the first committed step in the production of the second messenger inositol-1,4,5,-trisphosphate (PIP). May regulate Golgi disintegration/reorganization during mitosis, possibly via its phosphorylation. Involved in Golgi-to-plasma membrane trafficking (By similarity) (PubMed:10559940, PubMed:11277933, PubMed:12749687, PubMed:9405935). May play an important role in the inner ear development.</text>
</comment>
<comment type="function">
    <text evidence="11 13 17">(Microbial infection) Plays an essential role in Aichi virus RNA replication (PubMed:22124328, PubMed:22258260, PubMed:27989622). Recruited by ACBD3 at the viral replication sites (PubMed:22124328, PubMed:27989622).</text>
</comment>
<comment type="function">
    <text evidence="12">(Microbial infection) Required for cellular spike-mediated entry of human coronavirus SARS-CoV.</text>
</comment>
<comment type="catalytic activity">
    <reaction evidence="8 22">
        <text>a 1,2-diacyl-sn-glycero-3-phospho-(1D-myo-inositol) + ATP = a 1,2-diacyl-sn-glycero-3-phospho-(1D-myo-inositol 4-phosphate) + ADP + H(+)</text>
        <dbReference type="Rhea" id="RHEA:19877"/>
        <dbReference type="ChEBI" id="CHEBI:15378"/>
        <dbReference type="ChEBI" id="CHEBI:30616"/>
        <dbReference type="ChEBI" id="CHEBI:57880"/>
        <dbReference type="ChEBI" id="CHEBI:58178"/>
        <dbReference type="ChEBI" id="CHEBI:456216"/>
        <dbReference type="EC" id="2.7.1.67"/>
    </reaction>
    <physiologicalReaction direction="left-to-right" evidence="31">
        <dbReference type="Rhea" id="RHEA:19878"/>
    </physiologicalReaction>
</comment>
<comment type="cofactor">
    <cofactor evidence="8">
        <name>Mg(2+)</name>
        <dbReference type="ChEBI" id="CHEBI:18420"/>
    </cofactor>
    <cofactor evidence="8">
        <name>Mn(2+)</name>
        <dbReference type="ChEBI" id="CHEBI:29035"/>
    </cofactor>
</comment>
<comment type="activity regulation">
    <text evidence="1 8">Inhibited by wortmannin and adenosine (PubMed:11277933). Increased kinase activity upon interaction with NCS1/FREQ (By similarity).</text>
</comment>
<comment type="activity regulation">
    <text evidence="15 17">(Microbial infection) Activated by Aichi virus protein 3A, this activation is sensitized by ACBD3.</text>
</comment>
<comment type="biophysicochemical properties">
    <kinetics>
        <KM evidence="8">1 mM for PtdIns</KM>
        <KM evidence="8">1 mM for ATP</KM>
    </kinetics>
</comment>
<comment type="subunit">
    <text evidence="2 10 11 13 14 16 17 18 19">Interacts with ARF1 and ARF3 in the Golgi complex, but not with ARF4, ARF5 or ARF6 (PubMed:17555535). Interacts with NCS1/FREQ in a calcium-independent manner. Interacts with CALN1/CABP8 and CALN2/CABP7; in a calcium-dependent manner; this interaction competes with NCS1/FREQ binding (By similarity). Interacts with ACBD3 (PubMed:22124328, PubMed:22258260, PubMed:23572552, PubMed:27009356, PubMed:27989622). Interacts with ARMH3, YWHAB, YWHAE, YWHAG, YWHAH, YWHAQ, YWHAZ and SFN (PubMed:23572552). Interacts with GGA2 (via VHS domain); the interaction is important for PI4KB location at the Golgi apparatus membrane (PubMed:28289207). Interacts with ATG9A (PubMed:30917996).</text>
</comment>
<comment type="subunit">
    <text evidence="11 13 17">(Microbial infection) Interacts with Aichi virus protein 3A. Part of a complex Aichi virus protein 3A/ACBD3/PI4KB that allows the synthesis of PI4P at the viral RNA replication sites.</text>
</comment>
<comment type="interaction">
    <interactant intactId="EBI-1053214">
        <id>Q9UBF8</id>
    </interactant>
    <interactant intactId="EBI-1791792">
        <id>Q9H3P7</id>
        <label>ACBD3</label>
    </interactant>
    <organismsDiffer>false</organismsDiffer>
    <experiments>4</experiments>
</comment>
<comment type="interaction">
    <interactant intactId="EBI-1053214">
        <id>Q9UBF8</id>
    </interactant>
    <interactant intactId="EBI-359854">
        <id>P27348</id>
        <label>YWHAQ</label>
    </interactant>
    <organismsDiffer>false</organismsDiffer>
    <experiments>5</experiments>
</comment>
<comment type="interaction">
    <interactant intactId="EBI-1053214">
        <id>Q9UBF8</id>
    </interactant>
    <interactant intactId="EBI-2548993">
        <id>P03495</id>
        <label>NS</label>
    </interactant>
    <organismsDiffer>true</organismsDiffer>
    <experiments>2</experiments>
</comment>
<comment type="interaction">
    <interactant intactId="EBI-1053214">
        <id>Q9UBF8</id>
    </interactant>
    <interactant intactId="EBI-21242141">
        <id>PRO_0000424692</id>
        <dbReference type="UniProtKB" id="P03300"/>
    </interactant>
    <organismsDiffer>true</organismsDiffer>
    <experiments>9</experiments>
</comment>
<comment type="interaction">
    <interactant intactId="EBI-16107849">
        <id>Q9UBF8-2</id>
    </interactant>
    <interactant intactId="EBI-745098">
        <id>P62491</id>
        <label>RAB11A</label>
    </interactant>
    <organismsDiffer>false</organismsDiffer>
    <experiments>5</experiments>
</comment>
<comment type="subcellular location">
    <subcellularLocation>
        <location>Endomembrane system</location>
    </subcellularLocation>
    <subcellularLocation>
        <location>Mitochondrion outer membrane</location>
        <topology>Peripheral membrane protein</topology>
    </subcellularLocation>
    <subcellularLocation>
        <location>Rough endoplasmic reticulum membrane</location>
        <topology>Peripheral membrane protein</topology>
    </subcellularLocation>
    <subcellularLocation>
        <location evidence="11">Golgi apparatus</location>
    </subcellularLocation>
    <subcellularLocation>
        <location evidence="15 16 18">Golgi apparatus membrane</location>
    </subcellularLocation>
    <subcellularLocation>
        <location>Cytoplasm</location>
        <location>Perinuclear region</location>
    </subcellularLocation>
    <text evidence="15 16 18">Found in the outer membrane of mitochondria and membranes of the rough endoplasmic reticulum. Recruited to the Golgi complex by the small GTPase ARF to stimulate the synthesis of phosphatidylinositol 4,5-bisphosphate (PIP2) on the Golgi complex. Recruited to the Golgi apparatus membrane by ACBD3 (PubMed:24672044, PubMed:27009356, PubMed:28289207). GGA2 is also involved in the recruitment (PubMed:28289207).</text>
</comment>
<comment type="alternative products">
    <event type="alternative splicing"/>
    <isoform>
        <id>Q9UBF8-1</id>
        <name evidence="22">1</name>
        <name evidence="22">NPIK-B</name>
        <sequence type="displayed"/>
    </isoform>
    <isoform>
        <id>Q9UBF8-2</id>
        <name evidence="22">2</name>
        <name evidence="22">NPIK-C</name>
        <sequence type="described" ref="VSP_050627"/>
    </isoform>
    <isoform>
        <id>Q9UBF8-3</id>
        <name>3</name>
        <sequence type="described" ref="VSP_037133"/>
    </isoform>
</comment>
<comment type="tissue specificity">
    <text evidence="20 21 22 23">Widely expressed with highest levels in heart, skeletal muscle, pancreas, testis and ovary. Weakly expressed in liver (PubMed:9020160, PubMed:9405935, PubMed:9405938). Expressed in the innear ear in the epithelium of the spinal organ of corti.</text>
</comment>
<comment type="developmental stage">
    <text evidence="20">Expressed in 11-week old fetal inner ear.</text>
</comment>
<comment type="disease" evidence="20">
    <disease id="DI-06615">
        <name>Deafness, autosomal dominant, 87</name>
        <acronym>DFNA87</acronym>
        <description>A form of non-syndromic, sensorineural hearing loss. Sensorineural hearing loss results from damage to the neural receptors of the inner ear, the nerve pathways to the brain, or the area of the brain that receives sound information. DFNA87 is characterized by prelingual, profound sensorineural hearing loss with inner ear anomalies, including cochlear maldevelopment, absence of the osseous spiral lamina, and/or an enlarged vestibular aqueduct.</description>
        <dbReference type="MIM" id="620281"/>
    </disease>
    <text>The disease may be caused by variants affecting the gene represented in this entry.</text>
</comment>
<comment type="similarity">
    <text evidence="30">Belongs to the PI3/PI4-kinase family. Type III PI4K subfamily.</text>
</comment>
<comment type="sequence caution" evidence="30">
    <conflict type="erroneous initiation">
        <sequence resource="EMBL-CDS" id="BAA21661"/>
    </conflict>
    <text>Extended N-terminus.</text>
</comment>
<comment type="sequence caution" evidence="30">
    <conflict type="erroneous gene model prediction">
        <sequence resource="EMBL-CDS" id="EAW53450"/>
    </conflict>
</comment>
<proteinExistence type="evidence at protein level"/>
<name>PI4KB_HUMAN</name>
<accession>Q9UBF8</accession>
<accession>B4DGI2</accession>
<accession>O15096</accession>
<accession>P78405</accession>
<accession>Q5VWB9</accession>
<accession>Q5VWC0</accession>
<accession>Q5VWC1</accession>
<accession>Q9BWR6</accession>
<feature type="initiator methionine" description="Removed" evidence="14">
    <location>
        <position position="1"/>
    </location>
</feature>
<feature type="chain" id="PRO_0000088829" description="Phosphatidylinositol 4-kinase beta">
    <location>
        <begin position="2"/>
        <end position="816"/>
    </location>
</feature>
<feature type="domain" description="PIK helical" evidence="5">
    <location>
        <begin position="29"/>
        <end position="242"/>
    </location>
</feature>
<feature type="domain" description="PI3K/PI4K catalytic" evidence="4">
    <location>
        <begin position="535"/>
        <end position="801"/>
    </location>
</feature>
<feature type="region of interest" description="Disordered" evidence="6">
    <location>
        <begin position="1"/>
        <end position="30"/>
    </location>
</feature>
<feature type="region of interest" description="Interaction with ACBD3" evidence="16 17 32">
    <location>
        <begin position="41"/>
        <end position="67"/>
    </location>
</feature>
<feature type="region of interest" description="Disordered" evidence="6">
    <location>
        <begin position="101"/>
        <end position="120"/>
    </location>
</feature>
<feature type="region of interest" description="Disordered" evidence="6">
    <location>
        <begin position="248"/>
        <end position="318"/>
    </location>
</feature>
<feature type="region of interest" description="G-loop" evidence="4">
    <location>
        <begin position="541"/>
        <end position="547"/>
    </location>
</feature>
<feature type="region of interest" description="Catalytic loop" evidence="4">
    <location>
        <begin position="668"/>
        <end position="676"/>
    </location>
</feature>
<feature type="region of interest" description="Activation loop" evidence="4">
    <location>
        <begin position="687"/>
        <end position="711"/>
    </location>
</feature>
<feature type="compositionally biased region" description="Polar residues" evidence="6">
    <location>
        <begin position="278"/>
        <end position="297"/>
    </location>
</feature>
<feature type="compositionally biased region" description="Polar residues" evidence="6">
    <location>
        <begin position="306"/>
        <end position="318"/>
    </location>
</feature>
<feature type="modified residue" description="N-acetylglycine" evidence="14">
    <location>
        <position position="2"/>
    </location>
</feature>
<feature type="modified residue" description="Phosphoserine" evidence="8 40 42 44">
    <location>
        <position position="258"/>
    </location>
</feature>
<feature type="modified residue" description="Phosphothreonine" evidence="8">
    <location>
        <position position="263"/>
    </location>
</feature>
<feature type="modified residue" description="Phosphoserine" evidence="8 42 44">
    <location>
        <position position="266"/>
    </location>
</feature>
<feature type="modified residue" description="Phosphoserine" evidence="3">
    <location>
        <position position="275"/>
    </location>
</feature>
<feature type="modified residue" description="Phosphoserine" evidence="8 40 44">
    <location>
        <position position="277"/>
    </location>
</feature>
<feature type="modified residue" description="Phosphoserine" evidence="3">
    <location>
        <position position="284"/>
    </location>
</feature>
<feature type="modified residue" description="Phosphoserine" evidence="8 14">
    <location>
        <position position="294"/>
    </location>
</feature>
<feature type="modified residue" description="Phosphoserine" evidence="38 40 41 42 43 44">
    <location>
        <position position="428"/>
    </location>
</feature>
<feature type="modified residue" description="Phosphothreonine" evidence="8">
    <location>
        <position position="438"/>
    </location>
</feature>
<feature type="modified residue" description="Phosphoserine" evidence="8 39 40 44">
    <location>
        <position position="511"/>
    </location>
</feature>
<feature type="modified residue" description="Phosphothreonine" evidence="44">
    <location>
        <position position="517"/>
    </location>
</feature>
<feature type="modified residue" description="Phosphothreonine" evidence="8">
    <location>
        <position position="519"/>
    </location>
</feature>
<feature type="splice variant" id="VSP_037133" description="In isoform 3." evidence="24">
    <location>
        <begin position="1"/>
        <end position="332"/>
    </location>
</feature>
<feature type="splice variant" id="VSP_050627" description="In isoform 2." evidence="25 28 29">
    <location>
        <begin position="304"/>
        <end position="318"/>
    </location>
</feature>
<feature type="sequence variant" id="VAR_088345" description="In DFNA87; unable to rescue defective inner ear phenotype and sound stimuli response in zebrafish morphants; dbSNP:rs765001640." evidence="20">
    <original>Q</original>
    <variation>R</variation>
    <location>
        <position position="121"/>
    </location>
</feature>
<feature type="sequence variant" id="VAR_088346" description="In DFNA87; uncertain significance; unable to rescue defective inner ear phenotype and sound stimuli response in zebrafish morphants." evidence="20">
    <original>V</original>
    <variation>G</variation>
    <location>
        <position position="449"/>
    </location>
</feature>
<feature type="sequence variant" id="VAR_088347" description="In DFNA87; uncertain significance; unable to rescue defective inner ear phenotype and sound stimuli response in zebrafish morphants." evidence="20">
    <original>E</original>
    <variation>K</variation>
    <location>
        <position position="682"/>
    </location>
</feature>
<feature type="sequence variant" id="VAR_088348" description="In DFNA87; uncertain significance; unable to rescue defective inner ear phenotype and sound stimuli response in zebrafish morphants." evidence="20">
    <original>M</original>
    <variation>R</variation>
    <location>
        <position position="754"/>
    </location>
</feature>
<feature type="mutagenesis site" description="Small decrease in ARMH3-binding. No effect on ACBD3-, nor RAB11B-binding." evidence="14">
    <original>LSV</original>
    <variation>AAA</variation>
    <location>
        <begin position="40"/>
        <end position="42"/>
    </location>
</feature>
<feature type="mutagenesis site" description="No loss of interaction with ACBD3." evidence="16">
    <original>V</original>
    <variation>A</variation>
    <location>
        <position position="42"/>
    </location>
</feature>
<feature type="mutagenesis site" description="Drastically decreased ACBD3-binding. No effect on ARMH3-, nor RAB11B-binding." evidence="14">
    <original>IDP</original>
    <variation>AAA</variation>
    <location>
        <begin position="43"/>
        <end position="45"/>
    </location>
</feature>
<feature type="mutagenesis site" description="Loss of interaction with ACBD3." evidence="16 17">
    <original>I</original>
    <variation>A</variation>
    <location>
        <position position="43"/>
    </location>
</feature>
<feature type="mutagenesis site" description="Loss of interaction with ACBD3." evidence="17">
    <original>D</original>
    <variation>A</variation>
    <location>
        <position position="44"/>
    </location>
</feature>
<feature type="mutagenesis site" description="No effect on ACBD3-, ARMH3-, nor RAB11B-binding." evidence="14">
    <original>EV</original>
    <variation>AA</variation>
    <location>
        <begin position="46"/>
        <end position="47"/>
    </location>
</feature>
<feature type="mutagenesis site" description="No loss of interaction with ACBD3." evidence="16">
    <original>V</original>
    <variation>A</variation>
    <location>
        <position position="47"/>
    </location>
</feature>
<feature type="mutagenesis site" description="No effect on ACBD3-, ARMH3-, nor RAB11B-binding." evidence="14">
    <original>QK</original>
    <variation>AA</variation>
    <location>
        <begin position="49"/>
        <end position="50"/>
    </location>
</feature>
<feature type="mutagenesis site" description="No effect on ACBD3-, ARMH3-, nor RAB11B-binding." evidence="14">
    <original>C</original>
    <variation>A</variation>
    <location>
        <position position="52"/>
    </location>
</feature>
<feature type="mutagenesis site" description="Drastically decreased ARMH3- and RAB11B-binding. 6-fold increase in ACBD3-binding." evidence="14">
    <original>QE</original>
    <variation>AA</variation>
    <location>
        <begin position="53"/>
        <end position="54"/>
    </location>
</feature>
<feature type="mutagenesis site" description="Drastically decreased ACBD3-binding. No effect on ARMH3-, nor RAB11B-binding." evidence="14">
    <original>VL</original>
    <variation>AA</variation>
    <location>
        <begin position="55"/>
        <end position="56"/>
    </location>
</feature>
<feature type="mutagenesis site" description="Loss of interaction with ACBD3." evidence="16">
    <original>V</original>
    <variation>A</variation>
    <location>
        <position position="55"/>
    </location>
</feature>
<feature type="mutagenesis site" description="Loss of interaction with ACBD3." evidence="16">
    <original>L</original>
    <variation>A</variation>
    <location>
        <position position="56"/>
    </location>
</feature>
<feature type="mutagenesis site" description="No effect on ACBD3-, ARMH3-, nor RAB11B-binding." evidence="14">
    <original>EKV</original>
    <variation>AAA</variation>
    <location>
        <begin position="57"/>
        <end position="59"/>
    </location>
</feature>
<feature type="sequence conflict" description="In Ref. 3; AAC51156." evidence="30" ref="3">
    <original>L</original>
    <variation>V</variation>
    <location>
        <position position="216"/>
    </location>
</feature>
<feature type="sequence conflict" description="In Ref. 3; AAC51156." evidence="30" ref="3">
    <original>L</original>
    <variation>V</variation>
    <location>
        <position position="339"/>
    </location>
</feature>
<feature type="sequence conflict" description="In Ref. 3; AAC51156." evidence="30" ref="3">
    <original>A</original>
    <variation>V</variation>
    <location>
        <position position="340"/>
    </location>
</feature>
<feature type="sequence conflict" description="In Ref. 3; AAC51156." evidence="30" ref="3">
    <original>P</original>
    <variation>S</variation>
    <location>
        <position position="370"/>
    </location>
</feature>
<feature type="sequence conflict" description="In Ref. 4; BAG57793." evidence="30" ref="4">
    <original>F</original>
    <variation>S</variation>
    <location>
        <position position="446"/>
    </location>
</feature>
<feature type="sequence conflict" description="In Ref. 4; BAG57793." evidence="30" ref="4">
    <original>M</original>
    <variation>L</variation>
    <location>
        <position position="754"/>
    </location>
</feature>
<feature type="sequence conflict" description="In Ref. 4; BAG57793." evidence="30" ref="4">
    <original>S</original>
    <variation>G</variation>
    <location>
        <position position="796"/>
    </location>
</feature>
<feature type="helix" evidence="45">
    <location>
        <begin position="45"/>
        <end position="63"/>
    </location>
</feature>
<feature type="helix" evidence="47">
    <location>
        <begin position="129"/>
        <end position="134"/>
    </location>
</feature>
<feature type="helix" evidence="47">
    <location>
        <begin position="141"/>
        <end position="150"/>
    </location>
</feature>
<feature type="helix" evidence="47">
    <location>
        <begin position="154"/>
        <end position="163"/>
    </location>
</feature>
<feature type="helix" evidence="47">
    <location>
        <begin position="164"/>
        <end position="166"/>
    </location>
</feature>
<feature type="helix" evidence="47">
    <location>
        <begin position="169"/>
        <end position="173"/>
    </location>
</feature>
<feature type="helix" evidence="47">
    <location>
        <begin position="176"/>
        <end position="185"/>
    </location>
</feature>
<feature type="helix" evidence="47">
    <location>
        <begin position="188"/>
        <end position="204"/>
    </location>
</feature>
<feature type="helix" evidence="47">
    <location>
        <begin position="206"/>
        <end position="218"/>
    </location>
</feature>
<feature type="helix" evidence="47">
    <location>
        <begin position="234"/>
        <end position="242"/>
    </location>
</feature>
<feature type="turn" evidence="46">
    <location>
        <begin position="319"/>
        <end position="322"/>
    </location>
</feature>
<feature type="helix" evidence="49">
    <location>
        <begin position="323"/>
        <end position="339"/>
    </location>
</feature>
<feature type="strand" evidence="48">
    <location>
        <begin position="342"/>
        <end position="344"/>
    </location>
</feature>
<feature type="helix" evidence="49">
    <location>
        <begin position="345"/>
        <end position="359"/>
    </location>
</feature>
<feature type="helix" evidence="49">
    <location>
        <begin position="360"/>
        <end position="362"/>
    </location>
</feature>
<feature type="strand" evidence="47">
    <location>
        <begin position="364"/>
        <end position="366"/>
    </location>
</feature>
<feature type="strand" evidence="50">
    <location>
        <begin position="372"/>
        <end position="374"/>
    </location>
</feature>
<feature type="strand" evidence="49">
    <location>
        <begin position="376"/>
        <end position="380"/>
    </location>
</feature>
<feature type="helix" evidence="49">
    <location>
        <begin position="383"/>
        <end position="385"/>
    </location>
</feature>
<feature type="strand" evidence="48">
    <location>
        <begin position="392"/>
        <end position="394"/>
    </location>
</feature>
<feature type="strand" evidence="49">
    <location>
        <begin position="397"/>
        <end position="405"/>
    </location>
</feature>
<feature type="helix" evidence="49">
    <location>
        <begin position="409"/>
        <end position="411"/>
    </location>
</feature>
<feature type="helix" evidence="49">
    <location>
        <begin position="531"/>
        <end position="534"/>
    </location>
</feature>
<feature type="helix" evidence="49">
    <location>
        <begin position="537"/>
        <end position="547"/>
    </location>
</feature>
<feature type="turn" evidence="49">
    <location>
        <begin position="549"/>
        <end position="552"/>
    </location>
</feature>
<feature type="strand" evidence="49">
    <location>
        <begin position="556"/>
        <end position="566"/>
    </location>
</feature>
<feature type="helix" evidence="49">
    <location>
        <begin position="570"/>
        <end position="589"/>
    </location>
</feature>
<feature type="strand" evidence="49">
    <location>
        <begin position="600"/>
        <end position="602"/>
    </location>
</feature>
<feature type="strand" evidence="47">
    <location>
        <begin position="604"/>
        <end position="606"/>
    </location>
</feature>
<feature type="strand" evidence="49">
    <location>
        <begin position="608"/>
        <end position="610"/>
    </location>
</feature>
<feature type="strand" evidence="49">
    <location>
        <begin position="615"/>
        <end position="618"/>
    </location>
</feature>
<feature type="helix" evidence="49">
    <location>
        <begin position="619"/>
        <end position="626"/>
    </location>
</feature>
<feature type="helix" evidence="49">
    <location>
        <begin position="630"/>
        <end position="637"/>
    </location>
</feature>
<feature type="helix" evidence="49">
    <location>
        <begin position="644"/>
        <end position="667"/>
    </location>
</feature>
<feature type="strand" evidence="49">
    <location>
        <begin position="676"/>
        <end position="680"/>
    </location>
</feature>
<feature type="strand" evidence="49">
    <location>
        <begin position="685"/>
        <end position="687"/>
    </location>
</feature>
<feature type="helix" evidence="49">
    <location>
        <begin position="712"/>
        <end position="717"/>
    </location>
</feature>
<feature type="strand" evidence="48">
    <location>
        <begin position="721"/>
        <end position="723"/>
    </location>
</feature>
<feature type="helix" evidence="49">
    <location>
        <begin position="724"/>
        <end position="742"/>
    </location>
</feature>
<feature type="helix" evidence="49">
    <location>
        <begin position="744"/>
        <end position="757"/>
    </location>
</feature>
<feature type="helix" evidence="47">
    <location>
        <begin position="761"/>
        <end position="763"/>
    </location>
</feature>
<feature type="helix" evidence="49">
    <location>
        <begin position="767"/>
        <end position="774"/>
    </location>
</feature>
<feature type="strand" evidence="48">
    <location>
        <begin position="778"/>
        <end position="780"/>
    </location>
</feature>
<feature type="helix" evidence="49">
    <location>
        <begin position="782"/>
        <end position="796"/>
    </location>
</feature>
<feature type="turn" evidence="49">
    <location>
        <begin position="797"/>
        <end position="799"/>
    </location>
</feature>
<feature type="helix" evidence="49">
    <location>
        <begin position="801"/>
        <end position="805"/>
    </location>
</feature>
<feature type="helix" evidence="49">
    <location>
        <begin position="808"/>
        <end position="810"/>
    </location>
</feature>
<feature type="strand" evidence="49">
    <location>
        <begin position="812"/>
        <end position="814"/>
    </location>
</feature>
<feature type="modified residue" description="Phosphoserine" evidence="40">
    <location sequence="Q9UBF8-2">
        <position position="294"/>
    </location>
</feature>
<sequence length="816" mass="91379">MGDTVVEPAPLKPTSEPTSGPPGNNGGSLLSVITEGVGELSVIDPEVAQKACQEVLEKVKLLHGGVAVSSRGTPLELVNGDGVDSEIRCLDDPPAQIREEEDEMGAAVASGTAKGARRRRQNNSAKQSWLLRLFESKLFDISMAISYLYNSKEPGVQAYIGNRLFCFRNEDVDFYLPQLLNMYIHMDEDVGDAIKPYIVHRCRQSINFSLQCALLLGAYSSDMHISTQRHSRGTKLRKLILSDELKPAHRKRELPSLSPAPDTGLSPSKRTHQRSKSDATASISLSSNLKRTASNPKVENEDEELSSSTESIDNSFSSPVRLAPEREFIKSLMAIGKRLATLPTKEQKTQRLISELSLLNHKLPARVWLPTAGFDHHVVRVPHTQAVVLNSKDKAPYLIYVEVLECENFDTTSVPARIPENRIRSTRSVENLPECGITHEQRAGSFSTVPNYDNDDEAWSVDDIGELQVELPEVHTNSCDNISQFSVDSITSQESKEPVFIAAGDIRRRLSEQLAHTPTAFKRDPEDPSAVALKEPWQEKVRRIREGSPYGHLPNWRLLSVIVKCGDDLRQELLAFQVLKQLQSIWEQERVPLWIKPYKILVISADSGMIEPVVNAVSIHQVKKQSQLSLLDYFLQEHGSYTTEAFLSAQRNFVQSCAGYCLVCYLLQVKDRHNGNILLDAEGHIIHIDFGFILSSSPRNLGFETSAFKLTTEFVDVMGGLDGDMFNYYKMLMLQGLIAARKHMDKVVQIVEIMQQGSQLPCFHGSSTIRNLKERFHMSMTEEQLQLLVEQMVDGSMRSITTKLYDGFQYLTNGIM</sequence>